<accession>Q1WUL4</accession>
<dbReference type="EMBL" id="CP000233">
    <property type="protein sequence ID" value="ABD99321.1"/>
    <property type="molecule type" value="Genomic_DNA"/>
</dbReference>
<dbReference type="RefSeq" id="WP_003699817.1">
    <property type="nucleotide sequence ID" value="NC_007929.1"/>
</dbReference>
<dbReference type="RefSeq" id="YP_535404.1">
    <property type="nucleotide sequence ID" value="NC_007929.1"/>
</dbReference>
<dbReference type="SMR" id="Q1WUL4"/>
<dbReference type="STRING" id="362948.LSL_0512"/>
<dbReference type="GeneID" id="89465298"/>
<dbReference type="KEGG" id="lsl:LSL_0512"/>
<dbReference type="PATRIC" id="fig|362948.14.peg.590"/>
<dbReference type="HOGENOM" id="CLU_047155_0_2_9"/>
<dbReference type="OrthoDB" id="9808348at2"/>
<dbReference type="Proteomes" id="UP000006559">
    <property type="component" value="Chromosome"/>
</dbReference>
<dbReference type="GO" id="GO:0005737">
    <property type="term" value="C:cytoplasm"/>
    <property type="evidence" value="ECO:0007669"/>
    <property type="project" value="UniProtKB-SubCell"/>
</dbReference>
<dbReference type="GO" id="GO:0003746">
    <property type="term" value="F:translation elongation factor activity"/>
    <property type="evidence" value="ECO:0007669"/>
    <property type="project" value="UniProtKB-UniRule"/>
</dbReference>
<dbReference type="CDD" id="cd14275">
    <property type="entry name" value="UBA_EF-Ts"/>
    <property type="match status" value="1"/>
</dbReference>
<dbReference type="FunFam" id="1.10.286.20:FF:000001">
    <property type="entry name" value="Elongation factor Ts"/>
    <property type="match status" value="1"/>
</dbReference>
<dbReference type="FunFam" id="1.10.8.10:FF:000001">
    <property type="entry name" value="Elongation factor Ts"/>
    <property type="match status" value="1"/>
</dbReference>
<dbReference type="Gene3D" id="1.10.286.20">
    <property type="match status" value="1"/>
</dbReference>
<dbReference type="Gene3D" id="1.10.8.10">
    <property type="entry name" value="DNA helicase RuvA subunit, C-terminal domain"/>
    <property type="match status" value="1"/>
</dbReference>
<dbReference type="Gene3D" id="3.30.479.20">
    <property type="entry name" value="Elongation factor Ts, dimerisation domain"/>
    <property type="match status" value="2"/>
</dbReference>
<dbReference type="HAMAP" id="MF_00050">
    <property type="entry name" value="EF_Ts"/>
    <property type="match status" value="1"/>
</dbReference>
<dbReference type="InterPro" id="IPR036402">
    <property type="entry name" value="EF-Ts_dimer_sf"/>
</dbReference>
<dbReference type="InterPro" id="IPR001816">
    <property type="entry name" value="Transl_elong_EFTs/EF1B"/>
</dbReference>
<dbReference type="InterPro" id="IPR014039">
    <property type="entry name" value="Transl_elong_EFTs/EF1B_dimer"/>
</dbReference>
<dbReference type="InterPro" id="IPR018101">
    <property type="entry name" value="Transl_elong_Ts_CS"/>
</dbReference>
<dbReference type="InterPro" id="IPR009060">
    <property type="entry name" value="UBA-like_sf"/>
</dbReference>
<dbReference type="NCBIfam" id="TIGR00116">
    <property type="entry name" value="tsf"/>
    <property type="match status" value="1"/>
</dbReference>
<dbReference type="PANTHER" id="PTHR11741">
    <property type="entry name" value="ELONGATION FACTOR TS"/>
    <property type="match status" value="1"/>
</dbReference>
<dbReference type="PANTHER" id="PTHR11741:SF0">
    <property type="entry name" value="ELONGATION FACTOR TS, MITOCHONDRIAL"/>
    <property type="match status" value="1"/>
</dbReference>
<dbReference type="Pfam" id="PF00889">
    <property type="entry name" value="EF_TS"/>
    <property type="match status" value="1"/>
</dbReference>
<dbReference type="SUPFAM" id="SSF54713">
    <property type="entry name" value="Elongation factor Ts (EF-Ts), dimerisation domain"/>
    <property type="match status" value="2"/>
</dbReference>
<dbReference type="SUPFAM" id="SSF46934">
    <property type="entry name" value="UBA-like"/>
    <property type="match status" value="1"/>
</dbReference>
<dbReference type="PROSITE" id="PS01126">
    <property type="entry name" value="EF_TS_1"/>
    <property type="match status" value="1"/>
</dbReference>
<dbReference type="PROSITE" id="PS01127">
    <property type="entry name" value="EF_TS_2"/>
    <property type="match status" value="1"/>
</dbReference>
<name>EFTS_LIGS1</name>
<evidence type="ECO:0000255" key="1">
    <source>
        <dbReference type="HAMAP-Rule" id="MF_00050"/>
    </source>
</evidence>
<comment type="function">
    <text evidence="1">Associates with the EF-Tu.GDP complex and induces the exchange of GDP to GTP. It remains bound to the aminoacyl-tRNA.EF-Tu.GTP complex up to the GTP hydrolysis stage on the ribosome.</text>
</comment>
<comment type="subcellular location">
    <subcellularLocation>
        <location evidence="1">Cytoplasm</location>
    </subcellularLocation>
</comment>
<comment type="similarity">
    <text evidence="1">Belongs to the EF-Ts family.</text>
</comment>
<feature type="chain" id="PRO_1000006117" description="Elongation factor Ts">
    <location>
        <begin position="1"/>
        <end position="291"/>
    </location>
</feature>
<feature type="region of interest" description="Involved in Mg(2+) ion dislocation from EF-Tu" evidence="1">
    <location>
        <begin position="80"/>
        <end position="83"/>
    </location>
</feature>
<sequence length="291" mass="31688">MAKISAAQVKELRDKTGVGMMDAKKALVAVEGDMEKAIDFLREKGMAKAAKKSDRVAAEGLANVAVNGNKAVIVEVNAETDFVAQNDQFKALVKHIADVIAENTPADVEAALQLKTDKGTLNDELIEATQVIGEKISLRRFEVVEKADADNFGAYLHDGGRIAVLSVVEGADEATAKDVAMHVAAINPKYVNRDEVPEAEVAHEKEVLTEEAKNEGKPEKIIEKMVAGRLNKFFAEVALDDQDFVKDPDLTVAKYVASKNGKVKSFVRYEVGEGIEKKEENFAEEVMSQIK</sequence>
<proteinExistence type="inferred from homology"/>
<gene>
    <name evidence="1" type="primary">tsf</name>
    <name type="ordered locus">LSL_0512</name>
</gene>
<reference key="1">
    <citation type="journal article" date="2006" name="Proc. Natl. Acad. Sci. U.S.A.">
        <title>Multireplicon genome architecture of Lactobacillus salivarius.</title>
        <authorList>
            <person name="Claesson M.J."/>
            <person name="Li Y."/>
            <person name="Leahy S."/>
            <person name="Canchaya C."/>
            <person name="van Pijkeren J.P."/>
            <person name="Cerdeno-Tarraga A.M."/>
            <person name="Parkhill J."/>
            <person name="Flynn S."/>
            <person name="O'Sullivan G.C."/>
            <person name="Collins J.K."/>
            <person name="Higgins D."/>
            <person name="Shanahan F."/>
            <person name="Fitzgerald G.F."/>
            <person name="van Sinderen D."/>
            <person name="O'Toole P.W."/>
        </authorList>
    </citation>
    <scope>NUCLEOTIDE SEQUENCE [LARGE SCALE GENOMIC DNA]</scope>
    <source>
        <strain>UCC118</strain>
    </source>
</reference>
<protein>
    <recommendedName>
        <fullName evidence="1">Elongation factor Ts</fullName>
        <shortName evidence="1">EF-Ts</shortName>
    </recommendedName>
</protein>
<keyword id="KW-0963">Cytoplasm</keyword>
<keyword id="KW-0251">Elongation factor</keyword>
<keyword id="KW-0648">Protein biosynthesis</keyword>
<keyword id="KW-1185">Reference proteome</keyword>
<organism>
    <name type="scientific">Ligilactobacillus salivarius (strain UCC118)</name>
    <name type="common">Lactobacillus salivarius</name>
    <dbReference type="NCBI Taxonomy" id="362948"/>
    <lineage>
        <taxon>Bacteria</taxon>
        <taxon>Bacillati</taxon>
        <taxon>Bacillota</taxon>
        <taxon>Bacilli</taxon>
        <taxon>Lactobacillales</taxon>
        <taxon>Lactobacillaceae</taxon>
        <taxon>Ligilactobacillus</taxon>
    </lineage>
</organism>